<name>TM198_HUMAN</name>
<organism>
    <name type="scientific">Homo sapiens</name>
    <name type="common">Human</name>
    <dbReference type="NCBI Taxonomy" id="9606"/>
    <lineage>
        <taxon>Eukaryota</taxon>
        <taxon>Metazoa</taxon>
        <taxon>Chordata</taxon>
        <taxon>Craniata</taxon>
        <taxon>Vertebrata</taxon>
        <taxon>Euteleostomi</taxon>
        <taxon>Mammalia</taxon>
        <taxon>Eutheria</taxon>
        <taxon>Euarchontoglires</taxon>
        <taxon>Primates</taxon>
        <taxon>Haplorrhini</taxon>
        <taxon>Catarrhini</taxon>
        <taxon>Hominidae</taxon>
        <taxon>Homo</taxon>
    </lineage>
</organism>
<evidence type="ECO:0000250" key="1"/>
<evidence type="ECO:0000255" key="2"/>
<evidence type="ECO:0000256" key="3">
    <source>
        <dbReference type="SAM" id="MobiDB-lite"/>
    </source>
</evidence>
<evidence type="ECO:0000269" key="4">
    <source>
    </source>
</evidence>
<evidence type="ECO:0000305" key="5"/>
<gene>
    <name type="primary">TMEM198</name>
</gene>
<proteinExistence type="evidence at protein level"/>
<sequence length="360" mass="39475">MPGTVATLRFQLLPPEPDDAFWGAPCEQPLERRYQALPALVCIMCCLFGVVYCFFGYRCFKAVLFLTGLLFGSVVIFLLCYRERVLETQLSAGASAGIALGIGLLCGLVAMLVRSVGLFLVGLLLGLLLAAAALLGSAPYYQPGSVWGPLGLLLGGGLLCALLTLRWPRPLTTLATAVTGAALIATAADYFAELLLLGRYVVERLRAAPVPPLCWRSWALLALWPLLSLMGVLVQWRVTAEGDSHTEVVISRQRRRVQLMRIRQQEDRKEKRRKKRPPRAPLRGPRAPPRPGPPDPAYRRRPVPIKRFNGDVLSPSYIQSFRDRQTGSSLSSFMASPTDADYEYGSRGPLTACSGPPVRV</sequence>
<feature type="chain" id="PRO_0000326030" description="Transmembrane protein 198">
    <location>
        <begin position="1"/>
        <end position="360"/>
    </location>
</feature>
<feature type="transmembrane region" description="Helical" evidence="2">
    <location>
        <begin position="36"/>
        <end position="56"/>
    </location>
</feature>
<feature type="transmembrane region" description="Helical" evidence="2">
    <location>
        <begin position="59"/>
        <end position="79"/>
    </location>
</feature>
<feature type="transmembrane region" description="Helical" evidence="2">
    <location>
        <begin position="93"/>
        <end position="113"/>
    </location>
</feature>
<feature type="transmembrane region" description="Helical" evidence="2">
    <location>
        <begin position="116"/>
        <end position="136"/>
    </location>
</feature>
<feature type="transmembrane region" description="Helical" evidence="2">
    <location>
        <begin position="145"/>
        <end position="165"/>
    </location>
</feature>
<feature type="transmembrane region" description="Helical" evidence="2">
    <location>
        <begin position="177"/>
        <end position="197"/>
    </location>
</feature>
<feature type="transmembrane region" description="Helical" evidence="2">
    <location>
        <begin position="218"/>
        <end position="238"/>
    </location>
</feature>
<feature type="region of interest" description="Disordered" evidence="3">
    <location>
        <begin position="260"/>
        <end position="304"/>
    </location>
</feature>
<feature type="region of interest" description="Disordered" evidence="3">
    <location>
        <begin position="324"/>
        <end position="360"/>
    </location>
</feature>
<feature type="compositionally biased region" description="Pro residues" evidence="3">
    <location>
        <begin position="286"/>
        <end position="296"/>
    </location>
</feature>
<feature type="compositionally biased region" description="Polar residues" evidence="3">
    <location>
        <begin position="326"/>
        <end position="335"/>
    </location>
</feature>
<accession>Q66K66</accession>
<keyword id="KW-1003">Cell membrane</keyword>
<keyword id="KW-0968">Cytoplasmic vesicle</keyword>
<keyword id="KW-0217">Developmental protein</keyword>
<keyword id="KW-0472">Membrane</keyword>
<keyword id="KW-1267">Proteomics identification</keyword>
<keyword id="KW-1185">Reference proteome</keyword>
<keyword id="KW-0812">Transmembrane</keyword>
<keyword id="KW-1133">Transmembrane helix</keyword>
<keyword id="KW-0879">Wnt signaling pathway</keyword>
<comment type="function">
    <text evidence="4">Promotes LRP6 phosphorylation by casein kinases and thereby plays a role in Wnt signaling. May be a membrane scaffold protein involved in the self-aggregation of LRP6 to further enhance its activity.</text>
</comment>
<comment type="subunit">
    <text evidence="4">Interacts with LRP6.</text>
</comment>
<comment type="subcellular location">
    <subcellularLocation>
        <location evidence="5">Membrane</location>
        <topology evidence="5">Multi-pass membrane protein</topology>
    </subcellularLocation>
    <subcellularLocation>
        <location evidence="1">Cell membrane</location>
    </subcellularLocation>
    <subcellularLocation>
        <location evidence="1">Cytoplasmic vesicle</location>
    </subcellularLocation>
    <text evidence="1">Largely located to vesicle-like structures.</text>
</comment>
<comment type="similarity">
    <text evidence="5">Belongs to the TMEM198 family.</text>
</comment>
<protein>
    <recommendedName>
        <fullName>Transmembrane protein 198</fullName>
    </recommendedName>
</protein>
<reference key="1">
    <citation type="submission" date="2005-07" db="EMBL/GenBank/DDBJ databases">
        <authorList>
            <person name="Mural R.J."/>
            <person name="Istrail S."/>
            <person name="Sutton G.G."/>
            <person name="Florea L."/>
            <person name="Halpern A.L."/>
            <person name="Mobarry C.M."/>
            <person name="Lippert R."/>
            <person name="Walenz B."/>
            <person name="Shatkay H."/>
            <person name="Dew I."/>
            <person name="Miller J.R."/>
            <person name="Flanigan M.J."/>
            <person name="Edwards N.J."/>
            <person name="Bolanos R."/>
            <person name="Fasulo D."/>
            <person name="Halldorsson B.V."/>
            <person name="Hannenhalli S."/>
            <person name="Turner R."/>
            <person name="Yooseph S."/>
            <person name="Lu F."/>
            <person name="Nusskern D.R."/>
            <person name="Shue B.C."/>
            <person name="Zheng X.H."/>
            <person name="Zhong F."/>
            <person name="Delcher A.L."/>
            <person name="Huson D.H."/>
            <person name="Kravitz S.A."/>
            <person name="Mouchard L."/>
            <person name="Reinert K."/>
            <person name="Remington K.A."/>
            <person name="Clark A.G."/>
            <person name="Waterman M.S."/>
            <person name="Eichler E.E."/>
            <person name="Adams M.D."/>
            <person name="Hunkapiller M.W."/>
            <person name="Myers E.W."/>
            <person name="Venter J.C."/>
        </authorList>
    </citation>
    <scope>NUCLEOTIDE SEQUENCE [LARGE SCALE GENOMIC DNA]</scope>
</reference>
<reference key="2">
    <citation type="journal article" date="2004" name="Genome Res.">
        <title>The status, quality, and expansion of the NIH full-length cDNA project: the Mammalian Gene Collection (MGC).</title>
        <authorList>
            <consortium name="The MGC Project Team"/>
        </authorList>
    </citation>
    <scope>NUCLEOTIDE SEQUENCE [LARGE SCALE MRNA]</scope>
    <source>
        <tissue>Mammary gland</tissue>
    </source>
</reference>
<reference key="3">
    <citation type="journal article" date="2011" name="Mol. Cell. Biol.">
        <title>Transmembrane protein 198 promotes LRP6 phosphorylation and Wnt signaling activation.</title>
        <authorList>
            <person name="Liang J."/>
            <person name="Fu Y."/>
            <person name="Cruciat C.M."/>
            <person name="Jia S."/>
            <person name="Wang Y."/>
            <person name="Tong Z."/>
            <person name="Tao Q."/>
            <person name="Ingelfinger D."/>
            <person name="Boutros M."/>
            <person name="Meng A."/>
            <person name="Niehrs C."/>
            <person name="Wu W."/>
        </authorList>
    </citation>
    <scope>FUNCTION</scope>
    <scope>INTERACTION WITH LRP6</scope>
</reference>
<dbReference type="EMBL" id="CH471063">
    <property type="protein sequence ID" value="EAW70771.1"/>
    <property type="molecule type" value="Genomic_DNA"/>
</dbReference>
<dbReference type="EMBL" id="BC080573">
    <property type="protein sequence ID" value="AAH80573.1"/>
    <property type="molecule type" value="mRNA"/>
</dbReference>
<dbReference type="CCDS" id="CCDS33385.1"/>
<dbReference type="RefSeq" id="NP_001005209.1">
    <property type="nucleotide sequence ID" value="NM_001005209.3"/>
</dbReference>
<dbReference type="RefSeq" id="NP_001290027.1">
    <property type="nucleotide sequence ID" value="NM_001303098.2"/>
</dbReference>
<dbReference type="RefSeq" id="XP_016858856.1">
    <property type="nucleotide sequence ID" value="XM_017003367.3"/>
</dbReference>
<dbReference type="RefSeq" id="XP_054196549.1">
    <property type="nucleotide sequence ID" value="XM_054340574.1"/>
</dbReference>
<dbReference type="FunCoup" id="Q66K66">
    <property type="interactions" value="473"/>
</dbReference>
<dbReference type="STRING" id="9606.ENSP00000343507"/>
<dbReference type="iPTMnet" id="Q66K66"/>
<dbReference type="PhosphoSitePlus" id="Q66K66"/>
<dbReference type="BioMuta" id="TMEM198"/>
<dbReference type="DMDM" id="74736317"/>
<dbReference type="jPOST" id="Q66K66"/>
<dbReference type="MassIVE" id="Q66K66"/>
<dbReference type="PaxDb" id="9606-ENSP00000343507"/>
<dbReference type="PeptideAtlas" id="Q66K66"/>
<dbReference type="ProteomicsDB" id="65956"/>
<dbReference type="Antibodypedia" id="56764">
    <property type="antibodies" value="11 antibodies from 5 providers"/>
</dbReference>
<dbReference type="DNASU" id="130612"/>
<dbReference type="Ensembl" id="ENST00000344458.6">
    <property type="protein sequence ID" value="ENSP00000343507.2"/>
    <property type="gene ID" value="ENSG00000188760.11"/>
</dbReference>
<dbReference type="Ensembl" id="ENST00000373883.4">
    <property type="protein sequence ID" value="ENSP00000362990.3"/>
    <property type="gene ID" value="ENSG00000188760.11"/>
</dbReference>
<dbReference type="GeneID" id="130612"/>
<dbReference type="KEGG" id="hsa:130612"/>
<dbReference type="MANE-Select" id="ENST00000373883.4">
    <property type="protein sequence ID" value="ENSP00000362990.3"/>
    <property type="RefSeq nucleotide sequence ID" value="NM_001005209.3"/>
    <property type="RefSeq protein sequence ID" value="NP_001005209.1"/>
</dbReference>
<dbReference type="UCSC" id="uc002vme.5">
    <property type="organism name" value="human"/>
</dbReference>
<dbReference type="AGR" id="HGNC:33704"/>
<dbReference type="CTD" id="130612"/>
<dbReference type="DisGeNET" id="130612"/>
<dbReference type="GeneCards" id="TMEM198"/>
<dbReference type="HGNC" id="HGNC:33704">
    <property type="gene designation" value="TMEM198"/>
</dbReference>
<dbReference type="HPA" id="ENSG00000188760">
    <property type="expression patterns" value="Low tissue specificity"/>
</dbReference>
<dbReference type="neXtProt" id="NX_Q66K66"/>
<dbReference type="OpenTargets" id="ENSG00000188760"/>
<dbReference type="PharmGKB" id="PA162406347"/>
<dbReference type="VEuPathDB" id="HostDB:ENSG00000188760"/>
<dbReference type="eggNOG" id="ENOG502QS1E">
    <property type="taxonomic scope" value="Eukaryota"/>
</dbReference>
<dbReference type="GeneTree" id="ENSGT00390000016940"/>
<dbReference type="InParanoid" id="Q66K66"/>
<dbReference type="OMA" id="DYEYGSQ"/>
<dbReference type="OrthoDB" id="115781at2759"/>
<dbReference type="PAN-GO" id="Q66K66">
    <property type="GO annotations" value="3 GO annotations based on evolutionary models"/>
</dbReference>
<dbReference type="PhylomeDB" id="Q66K66"/>
<dbReference type="TreeFam" id="TF323324"/>
<dbReference type="PathwayCommons" id="Q66K66"/>
<dbReference type="SignaLink" id="Q66K66"/>
<dbReference type="BioGRID-ORCS" id="130612">
    <property type="hits" value="11 hits in 1158 CRISPR screens"/>
</dbReference>
<dbReference type="ChiTaRS" id="TMEM198">
    <property type="organism name" value="human"/>
</dbReference>
<dbReference type="GenomeRNAi" id="130612"/>
<dbReference type="Pharos" id="Q66K66">
    <property type="development level" value="Tdark"/>
</dbReference>
<dbReference type="PRO" id="PR:Q66K66"/>
<dbReference type="Proteomes" id="UP000005640">
    <property type="component" value="Chromosome 2"/>
</dbReference>
<dbReference type="RNAct" id="Q66K66">
    <property type="molecule type" value="protein"/>
</dbReference>
<dbReference type="Bgee" id="ENSG00000188760">
    <property type="expression patterns" value="Expressed in prefrontal cortex and 112 other cell types or tissues"/>
</dbReference>
<dbReference type="ExpressionAtlas" id="Q66K66">
    <property type="expression patterns" value="baseline and differential"/>
</dbReference>
<dbReference type="GO" id="GO:0031410">
    <property type="term" value="C:cytoplasmic vesicle"/>
    <property type="evidence" value="ECO:0000314"/>
    <property type="project" value="UniProtKB"/>
</dbReference>
<dbReference type="GO" id="GO:0005886">
    <property type="term" value="C:plasma membrane"/>
    <property type="evidence" value="ECO:0000314"/>
    <property type="project" value="UniProtKB"/>
</dbReference>
<dbReference type="GO" id="GO:0090263">
    <property type="term" value="P:positive regulation of canonical Wnt signaling pathway"/>
    <property type="evidence" value="ECO:0000314"/>
    <property type="project" value="UniProtKB"/>
</dbReference>
<dbReference type="GO" id="GO:0016055">
    <property type="term" value="P:Wnt signaling pathway"/>
    <property type="evidence" value="ECO:0007669"/>
    <property type="project" value="UniProtKB-KW"/>
</dbReference>
<dbReference type="InterPro" id="IPR025256">
    <property type="entry name" value="TM7S3/TM198-like_dom"/>
</dbReference>
<dbReference type="InterPro" id="IPR040236">
    <property type="entry name" value="TMEM198"/>
</dbReference>
<dbReference type="PANTHER" id="PTHR31247:SF7">
    <property type="entry name" value="TRANSMEMBRANE PROTEIN 198"/>
    <property type="match status" value="1"/>
</dbReference>
<dbReference type="PANTHER" id="PTHR31247">
    <property type="entry name" value="TRANSMEMBRANE PROTEIN 198 FAMILY MEMBER"/>
    <property type="match status" value="1"/>
</dbReference>
<dbReference type="Pfam" id="PF13886">
    <property type="entry name" value="TM7S3_TM198"/>
    <property type="match status" value="1"/>
</dbReference>